<name>FABA_SHEWM</name>
<comment type="function">
    <text evidence="1">Necessary for the introduction of cis unsaturation into fatty acids. Catalyzes the dehydration of (3R)-3-hydroxydecanoyl-ACP to E-(2)-decenoyl-ACP and then its isomerization to Z-(3)-decenoyl-ACP. Can catalyze the dehydratase reaction for beta-hydroxyacyl-ACPs with saturated chain lengths up to 16:0, being most active on intermediate chain length.</text>
</comment>
<comment type="catalytic activity">
    <reaction evidence="1">
        <text>a (3R)-hydroxyacyl-[ACP] = a (2E)-enoyl-[ACP] + H2O</text>
        <dbReference type="Rhea" id="RHEA:13097"/>
        <dbReference type="Rhea" id="RHEA-COMP:9925"/>
        <dbReference type="Rhea" id="RHEA-COMP:9945"/>
        <dbReference type="ChEBI" id="CHEBI:15377"/>
        <dbReference type="ChEBI" id="CHEBI:78784"/>
        <dbReference type="ChEBI" id="CHEBI:78827"/>
        <dbReference type="EC" id="4.2.1.59"/>
    </reaction>
</comment>
<comment type="catalytic activity">
    <reaction evidence="1">
        <text>(3R)-hydroxydecanoyl-[ACP] = (2E)-decenoyl-[ACP] + H2O</text>
        <dbReference type="Rhea" id="RHEA:41860"/>
        <dbReference type="Rhea" id="RHEA-COMP:9638"/>
        <dbReference type="Rhea" id="RHEA-COMP:9639"/>
        <dbReference type="ChEBI" id="CHEBI:15377"/>
        <dbReference type="ChEBI" id="CHEBI:78466"/>
        <dbReference type="ChEBI" id="CHEBI:78467"/>
    </reaction>
</comment>
<comment type="catalytic activity">
    <reaction evidence="1">
        <text>(2E)-decenoyl-[ACP] = (3Z)-decenoyl-[ACP]</text>
        <dbReference type="Rhea" id="RHEA:23568"/>
        <dbReference type="Rhea" id="RHEA-COMP:9639"/>
        <dbReference type="Rhea" id="RHEA-COMP:9927"/>
        <dbReference type="ChEBI" id="CHEBI:78467"/>
        <dbReference type="ChEBI" id="CHEBI:78798"/>
        <dbReference type="EC" id="5.3.3.14"/>
    </reaction>
</comment>
<comment type="pathway">
    <text evidence="1">Lipid metabolism; fatty acid biosynthesis.</text>
</comment>
<comment type="subunit">
    <text evidence="1">Homodimer.</text>
</comment>
<comment type="subcellular location">
    <subcellularLocation>
        <location evidence="1">Cytoplasm</location>
    </subcellularLocation>
</comment>
<comment type="similarity">
    <text evidence="1">Belongs to the thioester dehydratase family. FabA subfamily.</text>
</comment>
<keyword id="KW-0963">Cytoplasm</keyword>
<keyword id="KW-0275">Fatty acid biosynthesis</keyword>
<keyword id="KW-0276">Fatty acid metabolism</keyword>
<keyword id="KW-0413">Isomerase</keyword>
<keyword id="KW-0444">Lipid biosynthesis</keyword>
<keyword id="KW-0443">Lipid metabolism</keyword>
<keyword id="KW-0456">Lyase</keyword>
<keyword id="KW-1185">Reference proteome</keyword>
<feature type="chain" id="PRO_1000201220" description="3-hydroxydecanoyl-[acyl-carrier-protein] dehydratase">
    <location>
        <begin position="1"/>
        <end position="171"/>
    </location>
</feature>
<feature type="active site" evidence="1">
    <location>
        <position position="70"/>
    </location>
</feature>
<accession>B1KDN5</accession>
<dbReference type="EC" id="4.2.1.59" evidence="1"/>
<dbReference type="EC" id="5.3.3.14" evidence="1"/>
<dbReference type="EMBL" id="CP000961">
    <property type="protein sequence ID" value="ACA86432.1"/>
    <property type="molecule type" value="Genomic_DNA"/>
</dbReference>
<dbReference type="RefSeq" id="WP_012324777.1">
    <property type="nucleotide sequence ID" value="NC_010506.1"/>
</dbReference>
<dbReference type="SMR" id="B1KDN5"/>
<dbReference type="STRING" id="392500.Swoo_2148"/>
<dbReference type="KEGG" id="swd:Swoo_2148"/>
<dbReference type="eggNOG" id="COG0764">
    <property type="taxonomic scope" value="Bacteria"/>
</dbReference>
<dbReference type="HOGENOM" id="CLU_097925_0_0_6"/>
<dbReference type="UniPathway" id="UPA00094"/>
<dbReference type="Proteomes" id="UP000002168">
    <property type="component" value="Chromosome"/>
</dbReference>
<dbReference type="GO" id="GO:0005737">
    <property type="term" value="C:cytoplasm"/>
    <property type="evidence" value="ECO:0007669"/>
    <property type="project" value="UniProtKB-SubCell"/>
</dbReference>
<dbReference type="GO" id="GO:0019171">
    <property type="term" value="F:(3R)-hydroxyacyl-[acyl-carrier-protein] dehydratase activity"/>
    <property type="evidence" value="ECO:0007669"/>
    <property type="project" value="UniProtKB-UniRule"/>
</dbReference>
<dbReference type="GO" id="GO:0034017">
    <property type="term" value="F:trans-2-decenoyl-acyl-carrier-protein isomerase activity"/>
    <property type="evidence" value="ECO:0007669"/>
    <property type="project" value="UniProtKB-UniRule"/>
</dbReference>
<dbReference type="GO" id="GO:0006636">
    <property type="term" value="P:unsaturated fatty acid biosynthetic process"/>
    <property type="evidence" value="ECO:0007669"/>
    <property type="project" value="UniProtKB-UniRule"/>
</dbReference>
<dbReference type="CDD" id="cd01287">
    <property type="entry name" value="FabA"/>
    <property type="match status" value="1"/>
</dbReference>
<dbReference type="Gene3D" id="3.10.129.10">
    <property type="entry name" value="Hotdog Thioesterase"/>
    <property type="match status" value="1"/>
</dbReference>
<dbReference type="HAMAP" id="MF_00405">
    <property type="entry name" value="FabA"/>
    <property type="match status" value="1"/>
</dbReference>
<dbReference type="InterPro" id="IPR010083">
    <property type="entry name" value="FabA"/>
</dbReference>
<dbReference type="InterPro" id="IPR013114">
    <property type="entry name" value="FabA_FabZ"/>
</dbReference>
<dbReference type="InterPro" id="IPR029069">
    <property type="entry name" value="HotDog_dom_sf"/>
</dbReference>
<dbReference type="NCBIfam" id="TIGR01749">
    <property type="entry name" value="fabA"/>
    <property type="match status" value="1"/>
</dbReference>
<dbReference type="NCBIfam" id="NF003509">
    <property type="entry name" value="PRK05174.1"/>
    <property type="match status" value="1"/>
</dbReference>
<dbReference type="PANTHER" id="PTHR30272">
    <property type="entry name" value="3-HYDROXYACYL-[ACYL-CARRIER-PROTEIN] DEHYDRATASE"/>
    <property type="match status" value="1"/>
</dbReference>
<dbReference type="PANTHER" id="PTHR30272:SF8">
    <property type="entry name" value="3-HYDROXYDECANOYL-[ACYL-CARRIER-PROTEIN] DEHYDRATASE"/>
    <property type="match status" value="1"/>
</dbReference>
<dbReference type="Pfam" id="PF07977">
    <property type="entry name" value="FabA"/>
    <property type="match status" value="1"/>
</dbReference>
<dbReference type="SUPFAM" id="SSF54637">
    <property type="entry name" value="Thioesterase/thiol ester dehydrase-isomerase"/>
    <property type="match status" value="1"/>
</dbReference>
<gene>
    <name evidence="1" type="primary">fabA</name>
    <name type="ordered locus">Swoo_2148</name>
</gene>
<reference key="1">
    <citation type="submission" date="2008-02" db="EMBL/GenBank/DDBJ databases">
        <title>Complete sequence of Shewanella woodyi ATCC 51908.</title>
        <authorList>
            <consortium name="US DOE Joint Genome Institute"/>
            <person name="Copeland A."/>
            <person name="Lucas S."/>
            <person name="Lapidus A."/>
            <person name="Glavina del Rio T."/>
            <person name="Dalin E."/>
            <person name="Tice H."/>
            <person name="Bruce D."/>
            <person name="Goodwin L."/>
            <person name="Pitluck S."/>
            <person name="Sims D."/>
            <person name="Brettin T."/>
            <person name="Detter J.C."/>
            <person name="Han C."/>
            <person name="Kuske C.R."/>
            <person name="Schmutz J."/>
            <person name="Larimer F."/>
            <person name="Land M."/>
            <person name="Hauser L."/>
            <person name="Kyrpides N."/>
            <person name="Lykidis A."/>
            <person name="Zhao J.-S."/>
            <person name="Richardson P."/>
        </authorList>
    </citation>
    <scope>NUCLEOTIDE SEQUENCE [LARGE SCALE GENOMIC DNA]</scope>
    <source>
        <strain>ATCC 51908 / MS32</strain>
    </source>
</reference>
<protein>
    <recommendedName>
        <fullName evidence="1">3-hydroxydecanoyl-[acyl-carrier-protein] dehydratase</fullName>
        <ecNumber evidence="1">4.2.1.59</ecNumber>
    </recommendedName>
    <alternativeName>
        <fullName evidence="1">3-hydroxyacyl-[acyl-carrier-protein] dehydratase FabA</fullName>
    </alternativeName>
    <alternativeName>
        <fullName evidence="1">Beta-hydroxydecanoyl thioester dehydrase</fullName>
    </alternativeName>
    <alternativeName>
        <fullName evidence="1">Trans-2-decenoyl-[acyl-carrier-protein] isomerase</fullName>
        <ecNumber evidence="1">5.3.3.14</ecNumber>
    </alternativeName>
</protein>
<evidence type="ECO:0000255" key="1">
    <source>
        <dbReference type="HAMAP-Rule" id="MF_00405"/>
    </source>
</evidence>
<organism>
    <name type="scientific">Shewanella woodyi (strain ATCC 51908 / MS32)</name>
    <dbReference type="NCBI Taxonomy" id="392500"/>
    <lineage>
        <taxon>Bacteria</taxon>
        <taxon>Pseudomonadati</taxon>
        <taxon>Pseudomonadota</taxon>
        <taxon>Gammaproteobacteria</taxon>
        <taxon>Alteromonadales</taxon>
        <taxon>Shewanellaceae</taxon>
        <taxon>Shewanella</taxon>
    </lineage>
</organism>
<sequence length="171" mass="18848">MSKANSFNKEDLIACGHGELFGEHSPRLPIDNMLMIDRITKINADGGEFGKGEIVAELDINPELWFFKCHFDGDPVMPGCLGLDALWQLVGFFLGWEGAEGKGRALGVGEVKFTGQVLPDAKKVTYKLTVKRKVYRKLVMGIADAVMEVDGREIYSATDLKVGIFKDTSSF</sequence>
<proteinExistence type="inferred from homology"/>